<comment type="function">
    <text evidence="1 3">Required for normal cytokinesis during mitosis. Plays a role in the regulation of cell proliferation. May be a component of the chromosomal passenger complex (CPC), a complex that acts as a key regulator of mitosis. The CPC complex has essential functions at the centromere in ensuring correct chromosome alignment and segregation and is required for chromatin-induced microtubule stabilization and spindle assembly. Increases AURKB activity (By similarity). Inhibits apoptosis induced by TGFB1. Overexpression induces swelling of mitochondria and reduces mitochondrial membrane potential.</text>
</comment>
<comment type="subunit">
    <text evidence="1">Interacts with AURKA, AURKB, BIRC5 and INCENP. May be a component of the CPC at least composed of BIRC5/survivin, CDCA8/borealin, INCENP and AURKB/Aurora-B (By similarity).</text>
</comment>
<comment type="subcellular location">
    <subcellularLocation>
        <location evidence="4">Membrane</location>
        <topology evidence="4">Single-pass type I membrane protein</topology>
    </subcellularLocation>
    <subcellularLocation>
        <location evidence="3">Mitochondrion</location>
    </subcellularLocation>
    <subcellularLocation>
        <location evidence="1">Cytoplasm</location>
    </subcellularLocation>
    <subcellularLocation>
        <location evidence="1">Cytoplasm</location>
        <location evidence="1">Cytoskeleton</location>
        <location evidence="1">Microtubule organizing center</location>
        <location evidence="1">Centrosome</location>
    </subcellularLocation>
    <subcellularLocation>
        <location evidence="1">Cytoplasm</location>
        <location evidence="1">Cytoskeleton</location>
        <location evidence="1">Spindle</location>
    </subcellularLocation>
    <text evidence="1">Detected at the centrosome and along spindle fibers during prophase and metaphase. Detected at the midbody during telophase (By similarity).</text>
</comment>
<comment type="induction">
    <text evidence="3">Up-regulated by TGFB1 in mammary epithelial cells.</text>
</comment>
<comment type="PTM">
    <text evidence="3">Undergoes N-terminal proteolytic processing, removing a peptide of about 1 kDa from the N-terminus of the protein.</text>
</comment>
<comment type="similarity">
    <text evidence="4">Belongs to the JTB family.</text>
</comment>
<accession>O88824</accession>
<reference key="1">
    <citation type="journal article" date="1999" name="Oncogene">
        <title>JTB: a novel membrane protein gene at 1q21 rearranged in a jumping translocation.</title>
        <authorList>
            <person name="Hatakeyama S."/>
            <person name="Osawa M."/>
            <person name="Omine M."/>
            <person name="Ishikawa F."/>
        </authorList>
    </citation>
    <scope>NUCLEOTIDE SEQUENCE [MRNA]</scope>
</reference>
<reference key="2">
    <citation type="journal article" date="2004" name="Genome Res.">
        <title>The status, quality, and expansion of the NIH full-length cDNA project: the Mammalian Gene Collection (MGC).</title>
        <authorList>
            <consortium name="The MGC Project Team"/>
        </authorList>
    </citation>
    <scope>NUCLEOTIDE SEQUENCE [LARGE SCALE MRNA]</scope>
    <source>
        <strain>FVB/N</strain>
        <tissue>Mammary gland</tissue>
    </source>
</reference>
<reference key="3">
    <citation type="journal article" date="2007" name="Oncogene">
        <title>Characterization of Jumping translocation breakpoint (JTB) gene product isolated as a TGF-beta1-inducible clone involved in regulation of mitochondrial function, cell growth and cell death.</title>
        <authorList>
            <person name="Kanome T."/>
            <person name="Itoh N."/>
            <person name="Ishikawa F."/>
            <person name="Mori K."/>
            <person name="Kim-Kaneyama J.R."/>
            <person name="Nose K."/>
            <person name="Shibanuma M."/>
        </authorList>
    </citation>
    <scope>FUNCTION</scope>
    <scope>SUBCELLULAR LOCATION</scope>
    <scope>PROTEOLYTIC PROCESSING OF N-TERMINUS</scope>
    <scope>MUTAGENESIS OF 13-ALA-GLY-14</scope>
    <scope>INDUCTION</scope>
</reference>
<organism>
    <name type="scientific">Mus musculus</name>
    <name type="common">Mouse</name>
    <dbReference type="NCBI Taxonomy" id="10090"/>
    <lineage>
        <taxon>Eukaryota</taxon>
        <taxon>Metazoa</taxon>
        <taxon>Chordata</taxon>
        <taxon>Craniata</taxon>
        <taxon>Vertebrata</taxon>
        <taxon>Euteleostomi</taxon>
        <taxon>Mammalia</taxon>
        <taxon>Eutheria</taxon>
        <taxon>Euarchontoglires</taxon>
        <taxon>Glires</taxon>
        <taxon>Rodentia</taxon>
        <taxon>Myomorpha</taxon>
        <taxon>Muroidea</taxon>
        <taxon>Muridae</taxon>
        <taxon>Murinae</taxon>
        <taxon>Mus</taxon>
        <taxon>Mus</taxon>
    </lineage>
</organism>
<dbReference type="EMBL" id="AB016490">
    <property type="protein sequence ID" value="BAA33733.1"/>
    <property type="molecule type" value="mRNA"/>
</dbReference>
<dbReference type="EMBL" id="BC008139">
    <property type="protein sequence ID" value="AAH08139.1"/>
    <property type="molecule type" value="mRNA"/>
</dbReference>
<dbReference type="CCDS" id="CCDS17523.1"/>
<dbReference type="RefSeq" id="NP_996807.1">
    <property type="nucleotide sequence ID" value="NM_206924.2"/>
</dbReference>
<dbReference type="SMR" id="O88824"/>
<dbReference type="FunCoup" id="O88824">
    <property type="interactions" value="909"/>
</dbReference>
<dbReference type="STRING" id="10090.ENSMUSP00000029546"/>
<dbReference type="iPTMnet" id="O88824"/>
<dbReference type="PhosphoSitePlus" id="O88824"/>
<dbReference type="PaxDb" id="10090-ENSMUSP00000029546"/>
<dbReference type="ProteomicsDB" id="269428"/>
<dbReference type="Pumba" id="O88824"/>
<dbReference type="Ensembl" id="ENSMUST00000029546.15">
    <property type="protein sequence ID" value="ENSMUSP00000029546.9"/>
    <property type="gene ID" value="ENSMUSG00000027937.16"/>
</dbReference>
<dbReference type="GeneID" id="23922"/>
<dbReference type="KEGG" id="mmu:23922"/>
<dbReference type="UCSC" id="uc008qbo.1">
    <property type="organism name" value="mouse"/>
</dbReference>
<dbReference type="AGR" id="MGI:1346082"/>
<dbReference type="CTD" id="10899"/>
<dbReference type="MGI" id="MGI:1346082">
    <property type="gene designation" value="Jtb"/>
</dbReference>
<dbReference type="VEuPathDB" id="HostDB:ENSMUSG00000027937"/>
<dbReference type="eggNOG" id="KOG4084">
    <property type="taxonomic scope" value="Eukaryota"/>
</dbReference>
<dbReference type="GeneTree" id="ENSGT00390000016136"/>
<dbReference type="HOGENOM" id="CLU_130083_1_0_1"/>
<dbReference type="InParanoid" id="O88824"/>
<dbReference type="OMA" id="EECHPCS"/>
<dbReference type="OrthoDB" id="5971907at2759"/>
<dbReference type="PhylomeDB" id="O88824"/>
<dbReference type="TreeFam" id="TF316934"/>
<dbReference type="BioGRID-ORCS" id="23922">
    <property type="hits" value="9 hits in 80 CRISPR screens"/>
</dbReference>
<dbReference type="ChiTaRS" id="Jtb">
    <property type="organism name" value="mouse"/>
</dbReference>
<dbReference type="PRO" id="PR:O88824"/>
<dbReference type="Proteomes" id="UP000000589">
    <property type="component" value="Chromosome 3"/>
</dbReference>
<dbReference type="RNAct" id="O88824">
    <property type="molecule type" value="protein"/>
</dbReference>
<dbReference type="Bgee" id="ENSMUSG00000027937">
    <property type="expression patterns" value="Expressed in parotid gland and 259 other cell types or tissues"/>
</dbReference>
<dbReference type="ExpressionAtlas" id="O88824">
    <property type="expression patterns" value="baseline and differential"/>
</dbReference>
<dbReference type="GO" id="GO:0005813">
    <property type="term" value="C:centrosome"/>
    <property type="evidence" value="ECO:0007669"/>
    <property type="project" value="UniProtKB-SubCell"/>
</dbReference>
<dbReference type="GO" id="GO:0005737">
    <property type="term" value="C:cytoplasm"/>
    <property type="evidence" value="ECO:0000250"/>
    <property type="project" value="UniProtKB"/>
</dbReference>
<dbReference type="GO" id="GO:0016020">
    <property type="term" value="C:membrane"/>
    <property type="evidence" value="ECO:0007669"/>
    <property type="project" value="UniProtKB-SubCell"/>
</dbReference>
<dbReference type="GO" id="GO:0030496">
    <property type="term" value="C:midbody"/>
    <property type="evidence" value="ECO:0000250"/>
    <property type="project" value="UniProtKB"/>
</dbReference>
<dbReference type="GO" id="GO:0005739">
    <property type="term" value="C:mitochondrion"/>
    <property type="evidence" value="ECO:0000314"/>
    <property type="project" value="UniProtKB"/>
</dbReference>
<dbReference type="GO" id="GO:0005819">
    <property type="term" value="C:spindle"/>
    <property type="evidence" value="ECO:0007669"/>
    <property type="project" value="UniProtKB-SubCell"/>
</dbReference>
<dbReference type="GO" id="GO:0019901">
    <property type="term" value="F:protein kinase binding"/>
    <property type="evidence" value="ECO:0000250"/>
    <property type="project" value="UniProtKB"/>
</dbReference>
<dbReference type="GO" id="GO:0008637">
    <property type="term" value="P:apoptotic mitochondrial changes"/>
    <property type="evidence" value="ECO:0000314"/>
    <property type="project" value="MGI"/>
</dbReference>
<dbReference type="GO" id="GO:0000278">
    <property type="term" value="P:mitotic cell cycle"/>
    <property type="evidence" value="ECO:0000250"/>
    <property type="project" value="UniProtKB"/>
</dbReference>
<dbReference type="GO" id="GO:0000281">
    <property type="term" value="P:mitotic cytokinesis"/>
    <property type="evidence" value="ECO:0000250"/>
    <property type="project" value="UniProtKB"/>
</dbReference>
<dbReference type="GO" id="GO:0045860">
    <property type="term" value="P:positive regulation of protein kinase activity"/>
    <property type="evidence" value="ECO:0000250"/>
    <property type="project" value="UniProtKB"/>
</dbReference>
<dbReference type="GO" id="GO:0042127">
    <property type="term" value="P:regulation of cell population proliferation"/>
    <property type="evidence" value="ECO:0000315"/>
    <property type="project" value="UniProtKB"/>
</dbReference>
<dbReference type="FunFam" id="3.30.720.220:FF:000001">
    <property type="entry name" value="Jumping translocation breakpoint"/>
    <property type="match status" value="1"/>
</dbReference>
<dbReference type="Gene3D" id="3.30.720.220">
    <property type="match status" value="1"/>
</dbReference>
<dbReference type="InterPro" id="IPR008657">
    <property type="entry name" value="JTB"/>
</dbReference>
<dbReference type="PANTHER" id="PTHR13041">
    <property type="entry name" value="JTB PROTEIN-RELATED"/>
    <property type="match status" value="1"/>
</dbReference>
<dbReference type="PANTHER" id="PTHR13041:SF3">
    <property type="entry name" value="PROTEIN JTB"/>
    <property type="match status" value="1"/>
</dbReference>
<dbReference type="Pfam" id="PF05439">
    <property type="entry name" value="JTB"/>
    <property type="match status" value="1"/>
</dbReference>
<evidence type="ECO:0000250" key="1"/>
<evidence type="ECO:0000255" key="2"/>
<evidence type="ECO:0000269" key="3">
    <source>
    </source>
</evidence>
<evidence type="ECO:0000305" key="4"/>
<sequence length="146" mass="16329">MLAGAGRRGLPRAGHLCWLLCAFTLKLCEAEAPVREEKLSVSTSTSPCWLAEEFVVTEECTPCSNFQIKTTPECGSTGYVEKITCSSSKRNEFKSCRSALLEQHLFWKFEGVVVAVALVFACLVIVRQRQLDRKALEKVRKQIESI</sequence>
<name>JTB_MOUSE</name>
<feature type="signal peptide" evidence="2">
    <location>
        <begin position="1"/>
        <end position="30"/>
    </location>
</feature>
<feature type="chain" id="PRO_0000021536" description="Protein JTB">
    <location>
        <begin position="31"/>
        <end position="146"/>
    </location>
</feature>
<feature type="topological domain" description="Extracellular" evidence="2">
    <location>
        <begin position="31"/>
        <end position="105"/>
    </location>
</feature>
<feature type="transmembrane region" description="Helical" evidence="2">
    <location>
        <begin position="106"/>
        <end position="126"/>
    </location>
</feature>
<feature type="topological domain" description="Cytoplasmic" evidence="2">
    <location>
        <begin position="127"/>
        <end position="146"/>
    </location>
</feature>
<feature type="mutagenesis site" description="Abolishes N-terminal proteolytic processing." evidence="3">
    <original>AG</original>
    <variation>DD</variation>
    <location>
        <begin position="13"/>
        <end position="14"/>
    </location>
</feature>
<keyword id="KW-0053">Apoptosis</keyword>
<keyword id="KW-0131">Cell cycle</keyword>
<keyword id="KW-0132">Cell division</keyword>
<keyword id="KW-0963">Cytoplasm</keyword>
<keyword id="KW-0206">Cytoskeleton</keyword>
<keyword id="KW-0472">Membrane</keyword>
<keyword id="KW-0496">Mitochondrion</keyword>
<keyword id="KW-0498">Mitosis</keyword>
<keyword id="KW-1185">Reference proteome</keyword>
<keyword id="KW-0732">Signal</keyword>
<keyword id="KW-0812">Transmembrane</keyword>
<keyword id="KW-1133">Transmembrane helix</keyword>
<proteinExistence type="evidence at protein level"/>
<protein>
    <recommendedName>
        <fullName>Protein JTB</fullName>
    </recommendedName>
</protein>
<gene>
    <name type="primary">Jtb</name>
    <name type="synonym">Gm622</name>
</gene>